<gene>
    <name evidence="1" type="primary">tus</name>
    <name type="ordered locus">ECP_1554</name>
</gene>
<comment type="function">
    <text evidence="1">Trans-acting protein required for termination of DNA replication. Binds to DNA replication terminator sequences (terA to terF) to prevent the passage of replication forks. The termination efficiency will be affected by the affinity of this protein for the terminator sequence.</text>
</comment>
<comment type="subcellular location">
    <subcellularLocation>
        <location evidence="1">Cytoplasm</location>
    </subcellularLocation>
</comment>
<comment type="similarity">
    <text evidence="1">Belongs to the Tus family.</text>
</comment>
<accession>Q0THL8</accession>
<feature type="chain" id="PRO_1000014330" description="DNA replication terminus site-binding protein">
    <location>
        <begin position="1"/>
        <end position="309"/>
    </location>
</feature>
<protein>
    <recommendedName>
        <fullName evidence="1">DNA replication terminus site-binding protein</fullName>
        <shortName evidence="1">Ter-binding protein</shortName>
    </recommendedName>
</protein>
<dbReference type="EMBL" id="CP000247">
    <property type="protein sequence ID" value="ABG69561.1"/>
    <property type="molecule type" value="Genomic_DNA"/>
</dbReference>
<dbReference type="RefSeq" id="WP_001335501.1">
    <property type="nucleotide sequence ID" value="NC_008253.1"/>
</dbReference>
<dbReference type="SMR" id="Q0THL8"/>
<dbReference type="KEGG" id="ecp:ECP_1554"/>
<dbReference type="HOGENOM" id="CLU_078181_0_0_6"/>
<dbReference type="Proteomes" id="UP000009182">
    <property type="component" value="Chromosome"/>
</dbReference>
<dbReference type="GO" id="GO:0005737">
    <property type="term" value="C:cytoplasm"/>
    <property type="evidence" value="ECO:0007669"/>
    <property type="project" value="UniProtKB-SubCell"/>
</dbReference>
<dbReference type="GO" id="GO:0003677">
    <property type="term" value="F:DNA binding"/>
    <property type="evidence" value="ECO:0007669"/>
    <property type="project" value="UniProtKB-UniRule"/>
</dbReference>
<dbReference type="GO" id="GO:0006274">
    <property type="term" value="P:DNA replication termination"/>
    <property type="evidence" value="ECO:0007669"/>
    <property type="project" value="UniProtKB-UniRule"/>
</dbReference>
<dbReference type="Gene3D" id="3.30.54.10">
    <property type="match status" value="1"/>
</dbReference>
<dbReference type="Gene3D" id="3.50.14.10">
    <property type="entry name" value="Replication terminator Tus, domain 1 superfamily/Replication terminator Tus"/>
    <property type="match status" value="1"/>
</dbReference>
<dbReference type="HAMAP" id="MF_00483">
    <property type="entry name" value="Rep_term_Tus"/>
    <property type="match status" value="1"/>
</dbReference>
<dbReference type="InterPro" id="IPR008865">
    <property type="entry name" value="DNA_replication_term_site-bd"/>
</dbReference>
<dbReference type="InterPro" id="IPR036381">
    <property type="entry name" value="Tus_dom1"/>
</dbReference>
<dbReference type="InterPro" id="IPR036384">
    <property type="entry name" value="Tus_sf"/>
</dbReference>
<dbReference type="NCBIfam" id="TIGR02648">
    <property type="entry name" value="rep_term_tus"/>
    <property type="match status" value="1"/>
</dbReference>
<dbReference type="Pfam" id="PF05472">
    <property type="entry name" value="Ter"/>
    <property type="match status" value="1"/>
</dbReference>
<dbReference type="SUPFAM" id="SSF56596">
    <property type="entry name" value="Replication terminator protein (Tus)"/>
    <property type="match status" value="1"/>
</dbReference>
<proteinExistence type="inferred from homology"/>
<name>TUS_ECOL5</name>
<organism>
    <name type="scientific">Escherichia coli O6:K15:H31 (strain 536 / UPEC)</name>
    <dbReference type="NCBI Taxonomy" id="362663"/>
    <lineage>
        <taxon>Bacteria</taxon>
        <taxon>Pseudomonadati</taxon>
        <taxon>Pseudomonadota</taxon>
        <taxon>Gammaproteobacteria</taxon>
        <taxon>Enterobacterales</taxon>
        <taxon>Enterobacteriaceae</taxon>
        <taxon>Escherichia</taxon>
    </lineage>
</organism>
<keyword id="KW-0963">Cytoplasm</keyword>
<keyword id="KW-0235">DNA replication</keyword>
<keyword id="KW-0238">DNA-binding</keyword>
<sequence>MARYDLVGRLNTTFRQMEQELAAFAAHLEQHKLLVARVFSLPEVKKEDEHNPLNRIEIKQHLGNDAQSLALRHFRHLFIQQQSENRSSKAAVRLPGVLCYQVDNFSQAALVSHIQHINKLKTTFEHIVTVESELPSAARFEWVHRHLPGLITLNAYRTLTVLHDPATLRFGWANKHIIKNLHRDEVLAQLEKSLKSPRSVAPWTREEWQRKLEREYQDIAALPQNAKLKIKRPVKVQPIARVWYKGDQKQVQHACPTPLIALINRDNGAGVPDVGELLNYDADNVQHRYKPQAQPLRLIIPRLHLYVAD</sequence>
<evidence type="ECO:0000255" key="1">
    <source>
        <dbReference type="HAMAP-Rule" id="MF_00483"/>
    </source>
</evidence>
<reference key="1">
    <citation type="journal article" date="2006" name="Mol. Microbiol.">
        <title>Role of pathogenicity island-associated integrases in the genome plasticity of uropathogenic Escherichia coli strain 536.</title>
        <authorList>
            <person name="Hochhut B."/>
            <person name="Wilde C."/>
            <person name="Balling G."/>
            <person name="Middendorf B."/>
            <person name="Dobrindt U."/>
            <person name="Brzuszkiewicz E."/>
            <person name="Gottschalk G."/>
            <person name="Carniel E."/>
            <person name="Hacker J."/>
        </authorList>
    </citation>
    <scope>NUCLEOTIDE SEQUENCE [LARGE SCALE GENOMIC DNA]</scope>
    <source>
        <strain>536 / UPEC</strain>
    </source>
</reference>